<dbReference type="EC" id="3.2.1.-" evidence="4"/>
<dbReference type="EMBL" id="AB361565">
    <property type="protein sequence ID" value="BAG48551.1"/>
    <property type="molecule type" value="mRNA"/>
</dbReference>
<dbReference type="EMBL" id="BX284602">
    <property type="protein sequence ID" value="CAA88874.1"/>
    <property type="molecule type" value="Genomic_DNA"/>
</dbReference>
<dbReference type="PIR" id="T25115">
    <property type="entry name" value="T25115"/>
</dbReference>
<dbReference type="RefSeq" id="NP_495830.1">
    <property type="nucleotide sequence ID" value="NM_063429.5"/>
</dbReference>
<dbReference type="SMR" id="G5ECE8"/>
<dbReference type="FunCoup" id="G5ECE8">
    <property type="interactions" value="241"/>
</dbReference>
<dbReference type="STRING" id="6239.T22C8.2.1"/>
<dbReference type="CAZy" id="GH56">
    <property type="family name" value="Glycoside Hydrolase Family 56"/>
</dbReference>
<dbReference type="PaxDb" id="6239-T22C8.2"/>
<dbReference type="PeptideAtlas" id="G5ECE8"/>
<dbReference type="EnsemblMetazoa" id="T22C8.2.1">
    <property type="protein sequence ID" value="T22C8.2.1"/>
    <property type="gene ID" value="WBGene00011923"/>
</dbReference>
<dbReference type="EnsemblMetazoa" id="T22C8.2.2">
    <property type="protein sequence ID" value="T22C8.2.2"/>
    <property type="gene ID" value="WBGene00011923"/>
</dbReference>
<dbReference type="EnsemblMetazoa" id="T22C8.2.3">
    <property type="protein sequence ID" value="T22C8.2.3"/>
    <property type="gene ID" value="WBGene00011923"/>
</dbReference>
<dbReference type="GeneID" id="174383"/>
<dbReference type="KEGG" id="cel:CELE_T22C8.2"/>
<dbReference type="AGR" id="WB:WBGene00011923"/>
<dbReference type="CTD" id="174383"/>
<dbReference type="WormBase" id="T22C8.2">
    <property type="protein sequence ID" value="CE02350"/>
    <property type="gene ID" value="WBGene00011923"/>
    <property type="gene designation" value="chhy-1"/>
</dbReference>
<dbReference type="eggNOG" id="ENOG502QTUU">
    <property type="taxonomic scope" value="Eukaryota"/>
</dbReference>
<dbReference type="GeneTree" id="ENSGT01020000230364"/>
<dbReference type="HOGENOM" id="CLU_036366_1_1_1"/>
<dbReference type="OMA" id="DKKNVYR"/>
<dbReference type="OrthoDB" id="5796153at2759"/>
<dbReference type="Reactome" id="R-CEL-2024101">
    <property type="pathway name" value="CS/DS degradation"/>
</dbReference>
<dbReference type="Reactome" id="R-CEL-2160916">
    <property type="pathway name" value="Hyaluronan uptake and degradation"/>
</dbReference>
<dbReference type="Reactome" id="R-CEL-2534343">
    <property type="pathway name" value="Interaction With Cumulus Cells And The Zona Pellucida"/>
</dbReference>
<dbReference type="Proteomes" id="UP000001940">
    <property type="component" value="Chromosome II"/>
</dbReference>
<dbReference type="Bgee" id="WBGene00011923">
    <property type="expression patterns" value="Expressed in pharyngeal muscle cell (C elegans) and 2 other cell types or tissues"/>
</dbReference>
<dbReference type="GO" id="GO:0015929">
    <property type="term" value="F:hexosaminidase activity"/>
    <property type="evidence" value="ECO:0000314"/>
    <property type="project" value="WormBase"/>
</dbReference>
<dbReference type="GO" id="GO:0004415">
    <property type="term" value="F:hyalurononglucosaminidase activity"/>
    <property type="evidence" value="ECO:0007669"/>
    <property type="project" value="UniProtKB-EC"/>
</dbReference>
<dbReference type="GO" id="GO:0005975">
    <property type="term" value="P:carbohydrate metabolic process"/>
    <property type="evidence" value="ECO:0007669"/>
    <property type="project" value="InterPro"/>
</dbReference>
<dbReference type="GO" id="GO:0030207">
    <property type="term" value="P:chondroitin sulfate proteoglycan catabolic process"/>
    <property type="evidence" value="ECO:0000314"/>
    <property type="project" value="WormBase"/>
</dbReference>
<dbReference type="GO" id="GO:0030214">
    <property type="term" value="P:hyaluronan catabolic process"/>
    <property type="evidence" value="ECO:0000318"/>
    <property type="project" value="GO_Central"/>
</dbReference>
<dbReference type="FunFam" id="3.20.20.70:FF:000065">
    <property type="entry name" value="Hyaluronidase"/>
    <property type="match status" value="1"/>
</dbReference>
<dbReference type="Gene3D" id="3.20.20.70">
    <property type="entry name" value="Aldolase class I"/>
    <property type="match status" value="1"/>
</dbReference>
<dbReference type="InterPro" id="IPR013785">
    <property type="entry name" value="Aldolase_TIM"/>
</dbReference>
<dbReference type="InterPro" id="IPR000742">
    <property type="entry name" value="EGF-like_dom"/>
</dbReference>
<dbReference type="InterPro" id="IPR017853">
    <property type="entry name" value="Glycoside_hydrolase_SF"/>
</dbReference>
<dbReference type="InterPro" id="IPR018155">
    <property type="entry name" value="Hyaluronidase"/>
</dbReference>
<dbReference type="PANTHER" id="PTHR11769">
    <property type="entry name" value="HYALURONIDASE"/>
    <property type="match status" value="1"/>
</dbReference>
<dbReference type="PANTHER" id="PTHR11769:SF35">
    <property type="entry name" value="HYALURONIDASE"/>
    <property type="match status" value="1"/>
</dbReference>
<dbReference type="Pfam" id="PF01630">
    <property type="entry name" value="Glyco_hydro_56"/>
    <property type="match status" value="1"/>
</dbReference>
<dbReference type="PRINTS" id="PR00846">
    <property type="entry name" value="GLHYDRLASE56"/>
</dbReference>
<dbReference type="SUPFAM" id="SSF51445">
    <property type="entry name" value="(Trans)glycosidases"/>
    <property type="match status" value="1"/>
</dbReference>
<dbReference type="SUPFAM" id="SSF57196">
    <property type="entry name" value="EGF/Laminin"/>
    <property type="match status" value="1"/>
</dbReference>
<dbReference type="PROSITE" id="PS00022">
    <property type="entry name" value="EGF_1"/>
    <property type="match status" value="1"/>
</dbReference>
<dbReference type="PROSITE" id="PS01186">
    <property type="entry name" value="EGF_2"/>
    <property type="match status" value="1"/>
</dbReference>
<dbReference type="PROSITE" id="PS50026">
    <property type="entry name" value="EGF_3"/>
    <property type="match status" value="1"/>
</dbReference>
<protein>
    <recommendedName>
        <fullName evidence="5">Chondroitin hydrolase</fullName>
        <ecNumber evidence="4">3.2.1.-</ecNumber>
    </recommendedName>
</protein>
<name>CHHY1_CAEEL</name>
<keyword id="KW-1015">Disulfide bond</keyword>
<keyword id="KW-0245">EGF-like domain</keyword>
<keyword id="KW-0326">Glycosidase</keyword>
<keyword id="KW-0378">Hydrolase</keyword>
<keyword id="KW-1185">Reference proteome</keyword>
<keyword id="KW-0732">Signal</keyword>
<sequence>MVIVWYHQLLLVLLIFIGAAKGAQYIGSGASQPNRTDVVWMVPSWTCKNEYSIDVEKYGILQNEDQHFVGGKQFAIFYEHSFGKIPYFKAQNESDPKNGGLPQMGDLEAHLIQAEKDINETIPDENFNGIAVIDIEEFRPMWELSWGPFSVYKTESIRLTRQQHPYWSTKQIEWQAERDYEKACQKFFIETLRLGKRLRPNAKWGYYLFPKCNGDVGQKSDTDCSTLFQKFNDNLHWLWGESTALFPSIYLYPSQKQNPEYNFVNSGALITETKRIKRNYCPSCEIHVFTKIEYNPYYTPDDFYSKQNLASTLDLAIKMNANSVVIWSTSQSIGSRCGSLQTYVDNTLGPYLQLTDRNLDKCRMERCEGRGECYLPRPKTNPAIYNFACRCERPYFGKSCEYRGRRMGVSMPKASQTPQVIPDVTAYFSTSSNGTKKYNAPNQFYSRTGGDIKLARKL</sequence>
<accession>G5ECE8</accession>
<feature type="signal peptide" evidence="1">
    <location>
        <begin position="1"/>
        <end position="22"/>
    </location>
</feature>
<feature type="chain" id="PRO_5015091953" description="Chondroitin hydrolase" evidence="1">
    <location>
        <begin position="23"/>
        <end position="458"/>
    </location>
</feature>
<feature type="domain" description="EGF-like" evidence="2">
    <location>
        <begin position="358"/>
        <end position="401"/>
    </location>
</feature>
<feature type="disulfide bond" evidence="2">
    <location>
        <begin position="362"/>
        <end position="373"/>
    </location>
</feature>
<feature type="disulfide bond" evidence="2">
    <location>
        <begin position="367"/>
        <end position="389"/>
    </location>
</feature>
<feature type="disulfide bond" evidence="2">
    <location>
        <begin position="391"/>
        <end position="400"/>
    </location>
</feature>
<reference evidence="6" key="1">
    <citation type="journal article" date="2008" name="J. Biol. Chem.">
        <title>Identification of a novel chondroitin hydrolase in Caenorhabditis elegans.</title>
        <authorList>
            <person name="Kaneiwa T."/>
            <person name="Yamada S."/>
            <person name="Mizumoto S."/>
            <person name="Montano A.M."/>
            <person name="Mitani S."/>
            <person name="Sugahara K."/>
        </authorList>
    </citation>
    <scope>NUCLEOTIDE SEQUENCE [MRNA]</scope>
    <scope>FUNCTION</scope>
    <scope>BIOPHYSICOCHEMICAL PROPERTIES</scope>
</reference>
<reference evidence="8" key="2">
    <citation type="journal article" date="1998" name="Science">
        <title>Genome sequence of the nematode C. elegans: a platform for investigating biology.</title>
        <authorList>
            <consortium name="The C. elegans sequencing consortium"/>
        </authorList>
    </citation>
    <scope>NUCLEOTIDE SEQUENCE [LARGE SCALE GENOMIC DNA]</scope>
    <source>
        <strain evidence="8">Bristol N2</strain>
    </source>
</reference>
<proteinExistence type="evidence at protein level"/>
<evidence type="ECO:0000255" key="1"/>
<evidence type="ECO:0000255" key="2">
    <source>
        <dbReference type="PROSITE-ProRule" id="PRU00076"/>
    </source>
</evidence>
<evidence type="ECO:0000255" key="3">
    <source>
        <dbReference type="RuleBase" id="RU610713"/>
    </source>
</evidence>
<evidence type="ECO:0000269" key="4">
    <source>
    </source>
</evidence>
<evidence type="ECO:0000303" key="5">
    <source>
    </source>
</evidence>
<evidence type="ECO:0000305" key="6"/>
<evidence type="ECO:0000312" key="7">
    <source>
        <dbReference type="EMBL" id="BAG48551.1"/>
    </source>
</evidence>
<evidence type="ECO:0000312" key="8">
    <source>
        <dbReference type="Proteomes" id="UP000001940"/>
    </source>
</evidence>
<evidence type="ECO:0000312" key="9">
    <source>
        <dbReference type="WormBase" id="T22C8.2"/>
    </source>
</evidence>
<organism evidence="8">
    <name type="scientific">Caenorhabditis elegans</name>
    <dbReference type="NCBI Taxonomy" id="6239"/>
    <lineage>
        <taxon>Eukaryota</taxon>
        <taxon>Metazoa</taxon>
        <taxon>Ecdysozoa</taxon>
        <taxon>Nematoda</taxon>
        <taxon>Chromadorea</taxon>
        <taxon>Rhabditida</taxon>
        <taxon>Rhabditina</taxon>
        <taxon>Rhabditomorpha</taxon>
        <taxon>Rhabditoidea</taxon>
        <taxon>Rhabditidae</taxon>
        <taxon>Peloderinae</taxon>
        <taxon>Caenorhabditis</taxon>
    </lineage>
</organism>
<gene>
    <name evidence="9" type="primary">chhy-1</name>
    <name evidence="7" type="synonym">Chnase</name>
    <name evidence="9" type="ORF">T22C8.2</name>
</gene>
<comment type="function">
    <text evidence="4 5">Endo-beta-galactosaminidase that specifically hydrolyzes chondroitin, releasing GlcUA-beta-(1-&gt;3)-GalNAc-beta-(1-&gt;4)-GlcUA-beta-(1-&gt;3)-GalNAc as the main product (PubMed:18390555). Also hydrolyzes to a lesser extent chondroitin sulfates (CS-A, CS-C) and hyaluronic acid (PubMed:18390555). May regulate the function of chondroitin in cell division (PubMed:18390555).</text>
</comment>
<comment type="biophysicochemical properties">
    <kinetics>
        <KM evidence="4">0.12 mM for chondroitin (at pH 6.0 and 28 degrees Celsius)</KM>
        <KM evidence="4">0.48 mM for CS-A (at pH 6.0 and 28 degrees Celsius)</KM>
        <KM evidence="4">49.3 mM for hyaluronic acid (at pH 6.0 and 28 degrees Celsius)</KM>
    </kinetics>
    <phDependence>
        <text evidence="4">Optimum pH is 6.0.</text>
    </phDependence>
</comment>
<comment type="similarity">
    <text evidence="3">Belongs to the glycosyl hydrolase 56 family.</text>
</comment>
<comment type="caution">
    <text evidence="2">Lacks conserved residue(s) required for the propagation of feature annotation.</text>
</comment>